<evidence type="ECO:0000250" key="1"/>
<evidence type="ECO:0000255" key="2"/>
<evidence type="ECO:0000255" key="3">
    <source>
        <dbReference type="PROSITE-ProRule" id="PRU00448"/>
    </source>
</evidence>
<evidence type="ECO:0000256" key="4">
    <source>
        <dbReference type="SAM" id="MobiDB-lite"/>
    </source>
</evidence>
<evidence type="ECO:0000305" key="5"/>
<sequence>MDHLTKEQIAEFREAFNLFDKDGDGTITSKELGTVMGSLGQSPTEAELKKMVEEVDADGSGSIEFEEFLGLLARKLRDTGAEDDIREAFRVFDKDQNGFITPDELRHVMANLGDPLSDDELADMLHEADSDGDGQINYNEFLKVMMAKRRQNMMEGHGSGGHRSSNSHKKSGCCGPNSSCTIL</sequence>
<organism>
    <name type="scientific">Oryza sativa subsp. japonica</name>
    <name type="common">Rice</name>
    <dbReference type="NCBI Taxonomy" id="39947"/>
    <lineage>
        <taxon>Eukaryota</taxon>
        <taxon>Viridiplantae</taxon>
        <taxon>Streptophyta</taxon>
        <taxon>Embryophyta</taxon>
        <taxon>Tracheophyta</taxon>
        <taxon>Spermatophyta</taxon>
        <taxon>Magnoliopsida</taxon>
        <taxon>Liliopsida</taxon>
        <taxon>Poales</taxon>
        <taxon>Poaceae</taxon>
        <taxon>BOP clade</taxon>
        <taxon>Oryzoideae</taxon>
        <taxon>Oryzeae</taxon>
        <taxon>Oryzinae</taxon>
        <taxon>Oryza</taxon>
        <taxon>Oryza sativa</taxon>
    </lineage>
</organism>
<accession>Q0IUU4</accession>
<accession>A0A0P0XYS2</accession>
<accession>Q2RAX2</accession>
<name>CML2_ORYSJ</name>
<reference key="1">
    <citation type="journal article" date="2005" name="BMC Biol.">
        <title>The sequence of rice chromosomes 11 and 12, rich in disease resistance genes and recent gene duplications.</title>
        <authorList>
            <consortium name="The rice chromosomes 11 and 12 sequencing consortia"/>
        </authorList>
    </citation>
    <scope>NUCLEOTIDE SEQUENCE [LARGE SCALE GENOMIC DNA]</scope>
    <source>
        <strain>cv. Nipponbare</strain>
    </source>
</reference>
<reference key="2">
    <citation type="journal article" date="2005" name="Nature">
        <title>The map-based sequence of the rice genome.</title>
        <authorList>
            <consortium name="International rice genome sequencing project (IRGSP)"/>
        </authorList>
    </citation>
    <scope>NUCLEOTIDE SEQUENCE [LARGE SCALE GENOMIC DNA]</scope>
    <source>
        <strain>cv. Nipponbare</strain>
    </source>
</reference>
<reference key="3">
    <citation type="journal article" date="2008" name="Nucleic Acids Res.">
        <title>The rice annotation project database (RAP-DB): 2008 update.</title>
        <authorList>
            <consortium name="The rice annotation project (RAP)"/>
        </authorList>
    </citation>
    <scope>GENOME REANNOTATION</scope>
    <source>
        <strain>cv. Nipponbare</strain>
    </source>
</reference>
<reference key="4">
    <citation type="journal article" date="2013" name="Rice">
        <title>Improvement of the Oryza sativa Nipponbare reference genome using next generation sequence and optical map data.</title>
        <authorList>
            <person name="Kawahara Y."/>
            <person name="de la Bastide M."/>
            <person name="Hamilton J.P."/>
            <person name="Kanamori H."/>
            <person name="McCombie W.R."/>
            <person name="Ouyang S."/>
            <person name="Schwartz D.C."/>
            <person name="Tanaka T."/>
            <person name="Wu J."/>
            <person name="Zhou S."/>
            <person name="Childs K.L."/>
            <person name="Davidson R.M."/>
            <person name="Lin H."/>
            <person name="Quesada-Ocampo L."/>
            <person name="Vaillancourt B."/>
            <person name="Sakai H."/>
            <person name="Lee S.S."/>
            <person name="Kim J."/>
            <person name="Numa H."/>
            <person name="Itoh T."/>
            <person name="Buell C.R."/>
            <person name="Matsumoto T."/>
        </authorList>
    </citation>
    <scope>GENOME REANNOTATION</scope>
    <source>
        <strain>cv. Nipponbare</strain>
    </source>
</reference>
<reference key="5">
    <citation type="journal article" date="2005" name="PLoS Biol.">
        <title>The genomes of Oryza sativa: a history of duplications.</title>
        <authorList>
            <person name="Yu J."/>
            <person name="Wang J."/>
            <person name="Lin W."/>
            <person name="Li S."/>
            <person name="Li H."/>
            <person name="Zhou J."/>
            <person name="Ni P."/>
            <person name="Dong W."/>
            <person name="Hu S."/>
            <person name="Zeng C."/>
            <person name="Zhang J."/>
            <person name="Zhang Y."/>
            <person name="Li R."/>
            <person name="Xu Z."/>
            <person name="Li S."/>
            <person name="Li X."/>
            <person name="Zheng H."/>
            <person name="Cong L."/>
            <person name="Lin L."/>
            <person name="Yin J."/>
            <person name="Geng J."/>
            <person name="Li G."/>
            <person name="Shi J."/>
            <person name="Liu J."/>
            <person name="Lv H."/>
            <person name="Li J."/>
            <person name="Wang J."/>
            <person name="Deng Y."/>
            <person name="Ran L."/>
            <person name="Shi X."/>
            <person name="Wang X."/>
            <person name="Wu Q."/>
            <person name="Li C."/>
            <person name="Ren X."/>
            <person name="Wang J."/>
            <person name="Wang X."/>
            <person name="Li D."/>
            <person name="Liu D."/>
            <person name="Zhang X."/>
            <person name="Ji Z."/>
            <person name="Zhao W."/>
            <person name="Sun Y."/>
            <person name="Zhang Z."/>
            <person name="Bao J."/>
            <person name="Han Y."/>
            <person name="Dong L."/>
            <person name="Ji J."/>
            <person name="Chen P."/>
            <person name="Wu S."/>
            <person name="Liu J."/>
            <person name="Xiao Y."/>
            <person name="Bu D."/>
            <person name="Tan J."/>
            <person name="Yang L."/>
            <person name="Ye C."/>
            <person name="Zhang J."/>
            <person name="Xu J."/>
            <person name="Zhou Y."/>
            <person name="Yu Y."/>
            <person name="Zhang B."/>
            <person name="Zhuang S."/>
            <person name="Wei H."/>
            <person name="Liu B."/>
            <person name="Lei M."/>
            <person name="Yu H."/>
            <person name="Li Y."/>
            <person name="Xu H."/>
            <person name="Wei S."/>
            <person name="He X."/>
            <person name="Fang L."/>
            <person name="Zhang Z."/>
            <person name="Zhang Y."/>
            <person name="Huang X."/>
            <person name="Su Z."/>
            <person name="Tong W."/>
            <person name="Li J."/>
            <person name="Tong Z."/>
            <person name="Li S."/>
            <person name="Ye J."/>
            <person name="Wang L."/>
            <person name="Fang L."/>
            <person name="Lei T."/>
            <person name="Chen C.-S."/>
            <person name="Chen H.-C."/>
            <person name="Xu Z."/>
            <person name="Li H."/>
            <person name="Huang H."/>
            <person name="Zhang F."/>
            <person name="Xu H."/>
            <person name="Li N."/>
            <person name="Zhao C."/>
            <person name="Li S."/>
            <person name="Dong L."/>
            <person name="Huang Y."/>
            <person name="Li L."/>
            <person name="Xi Y."/>
            <person name="Qi Q."/>
            <person name="Li W."/>
            <person name="Zhang B."/>
            <person name="Hu W."/>
            <person name="Zhang Y."/>
            <person name="Tian X."/>
            <person name="Jiao Y."/>
            <person name="Liang X."/>
            <person name="Jin J."/>
            <person name="Gao L."/>
            <person name="Zheng W."/>
            <person name="Hao B."/>
            <person name="Liu S.-M."/>
            <person name="Wang W."/>
            <person name="Yuan L."/>
            <person name="Cao M."/>
            <person name="McDermott J."/>
            <person name="Samudrala R."/>
            <person name="Wang J."/>
            <person name="Wong G.K.-S."/>
            <person name="Yang H."/>
        </authorList>
    </citation>
    <scope>NUCLEOTIDE SEQUENCE [LARGE SCALE GENOMIC DNA]</scope>
    <source>
        <strain>cv. Nipponbare</strain>
    </source>
</reference>
<reference key="6">
    <citation type="journal article" date="2007" name="BMC Plant Biol.">
        <title>Genome-wide identification and analyses of the rice calmodulin and related potential calcium sensor proteins.</title>
        <authorList>
            <person name="Boonburapong B."/>
            <person name="Buaboocha T."/>
        </authorList>
    </citation>
    <scope>GENE FAMILY</scope>
    <scope>NOMENCLATURE</scope>
</reference>
<protein>
    <recommendedName>
        <fullName>Putative calmodulin-like protein 2</fullName>
    </recommendedName>
</protein>
<comment type="function">
    <text evidence="1">Potential calcium sensor.</text>
</comment>
<comment type="subcellular location">
    <subcellularLocation>
        <location evidence="5">Membrane</location>
        <topology evidence="5">Lipid-anchor</topology>
    </subcellularLocation>
</comment>
<comment type="similarity">
    <text evidence="5">Belongs to the calmodulin family.</text>
</comment>
<comment type="sequence caution" evidence="5">
    <conflict type="erroneous gene model prediction">
        <sequence resource="EMBL-CDS" id="ABA91315"/>
    </conflict>
</comment>
<comment type="sequence caution" evidence="5">
    <conflict type="erroneous gene model prediction">
        <sequence resource="EMBL-CDS" id="BAF27521"/>
    </conflict>
</comment>
<comment type="sequence caution" evidence="5">
    <conflict type="erroneous gene model prediction">
        <sequence resource="EMBL-CDS" id="EAZ17329"/>
    </conflict>
</comment>
<feature type="chain" id="PRO_0000338417" description="Putative calmodulin-like protein 2">
    <location>
        <begin position="1"/>
        <end position="180"/>
    </location>
</feature>
<feature type="propeptide" id="PRO_0000396748" description="Removed in mature form" evidence="1">
    <location>
        <begin position="181"/>
        <end position="183"/>
    </location>
</feature>
<feature type="domain" description="EF-hand 1" evidence="3">
    <location>
        <begin position="7"/>
        <end position="42"/>
    </location>
</feature>
<feature type="domain" description="EF-hand 2" evidence="3">
    <location>
        <begin position="43"/>
        <end position="78"/>
    </location>
</feature>
<feature type="domain" description="EF-hand 3" evidence="3">
    <location>
        <begin position="80"/>
        <end position="115"/>
    </location>
</feature>
<feature type="domain" description="EF-hand 4" evidence="3">
    <location>
        <begin position="116"/>
        <end position="151"/>
    </location>
</feature>
<feature type="region of interest" description="Disordered" evidence="4">
    <location>
        <begin position="154"/>
        <end position="183"/>
    </location>
</feature>
<feature type="binding site" evidence="3">
    <location>
        <position position="20"/>
    </location>
    <ligand>
        <name>Ca(2+)</name>
        <dbReference type="ChEBI" id="CHEBI:29108"/>
        <label>1</label>
    </ligand>
</feature>
<feature type="binding site" evidence="3">
    <location>
        <position position="22"/>
    </location>
    <ligand>
        <name>Ca(2+)</name>
        <dbReference type="ChEBI" id="CHEBI:29108"/>
        <label>1</label>
    </ligand>
</feature>
<feature type="binding site" evidence="3">
    <location>
        <position position="24"/>
    </location>
    <ligand>
        <name>Ca(2+)</name>
        <dbReference type="ChEBI" id="CHEBI:29108"/>
        <label>1</label>
    </ligand>
</feature>
<feature type="binding site" evidence="3">
    <location>
        <position position="26"/>
    </location>
    <ligand>
        <name>Ca(2+)</name>
        <dbReference type="ChEBI" id="CHEBI:29108"/>
        <label>1</label>
    </ligand>
</feature>
<feature type="binding site" evidence="3">
    <location>
        <position position="31"/>
    </location>
    <ligand>
        <name>Ca(2+)</name>
        <dbReference type="ChEBI" id="CHEBI:29108"/>
        <label>1</label>
    </ligand>
</feature>
<feature type="binding site" evidence="3">
    <location>
        <position position="56"/>
    </location>
    <ligand>
        <name>Ca(2+)</name>
        <dbReference type="ChEBI" id="CHEBI:29108"/>
        <label>2</label>
    </ligand>
</feature>
<feature type="binding site" evidence="3">
    <location>
        <position position="58"/>
    </location>
    <ligand>
        <name>Ca(2+)</name>
        <dbReference type="ChEBI" id="CHEBI:29108"/>
        <label>2</label>
    </ligand>
</feature>
<feature type="binding site" evidence="3">
    <location>
        <position position="60"/>
    </location>
    <ligand>
        <name>Ca(2+)</name>
        <dbReference type="ChEBI" id="CHEBI:29108"/>
        <label>2</label>
    </ligand>
</feature>
<feature type="binding site" evidence="3">
    <location>
        <position position="62"/>
    </location>
    <ligand>
        <name>Ca(2+)</name>
        <dbReference type="ChEBI" id="CHEBI:29108"/>
        <label>2</label>
    </ligand>
</feature>
<feature type="binding site" evidence="3">
    <location>
        <position position="67"/>
    </location>
    <ligand>
        <name>Ca(2+)</name>
        <dbReference type="ChEBI" id="CHEBI:29108"/>
        <label>2</label>
    </ligand>
</feature>
<feature type="binding site" evidence="3">
    <location>
        <position position="93"/>
    </location>
    <ligand>
        <name>Ca(2+)</name>
        <dbReference type="ChEBI" id="CHEBI:29108"/>
        <label>3</label>
    </ligand>
</feature>
<feature type="binding site" evidence="3">
    <location>
        <position position="95"/>
    </location>
    <ligand>
        <name>Ca(2+)</name>
        <dbReference type="ChEBI" id="CHEBI:29108"/>
        <label>3</label>
    </ligand>
</feature>
<feature type="binding site" evidence="3">
    <location>
        <position position="97"/>
    </location>
    <ligand>
        <name>Ca(2+)</name>
        <dbReference type="ChEBI" id="CHEBI:29108"/>
        <label>3</label>
    </ligand>
</feature>
<feature type="binding site" evidence="3">
    <location>
        <position position="104"/>
    </location>
    <ligand>
        <name>Ca(2+)</name>
        <dbReference type="ChEBI" id="CHEBI:29108"/>
        <label>3</label>
    </ligand>
</feature>
<feature type="binding site" evidence="3">
    <location>
        <position position="129"/>
    </location>
    <ligand>
        <name>Ca(2+)</name>
        <dbReference type="ChEBI" id="CHEBI:29108"/>
        <label>4</label>
    </ligand>
</feature>
<feature type="binding site" evidence="3">
    <location>
        <position position="131"/>
    </location>
    <ligand>
        <name>Ca(2+)</name>
        <dbReference type="ChEBI" id="CHEBI:29108"/>
        <label>4</label>
    </ligand>
</feature>
<feature type="binding site" evidence="3">
    <location>
        <position position="133"/>
    </location>
    <ligand>
        <name>Ca(2+)</name>
        <dbReference type="ChEBI" id="CHEBI:29108"/>
        <label>4</label>
    </ligand>
</feature>
<feature type="binding site" evidence="3">
    <location>
        <position position="135"/>
    </location>
    <ligand>
        <name>Ca(2+)</name>
        <dbReference type="ChEBI" id="CHEBI:29108"/>
        <label>4</label>
    </ligand>
</feature>
<feature type="binding site" evidence="3">
    <location>
        <position position="140"/>
    </location>
    <ligand>
        <name>Ca(2+)</name>
        <dbReference type="ChEBI" id="CHEBI:29108"/>
        <label>4</label>
    </ligand>
</feature>
<feature type="modified residue" description="Cysteine methyl ester" evidence="1">
    <location>
        <position position="180"/>
    </location>
</feature>
<feature type="lipid moiety-binding region" description="S-palmitoyl cysteine" evidence="2">
    <location>
        <position position="173"/>
    </location>
</feature>
<feature type="lipid moiety-binding region" description="S-palmitoyl cysteine" evidence="2">
    <location>
        <position position="174"/>
    </location>
</feature>
<feature type="lipid moiety-binding region" description="S-farnesyl cysteine" evidence="1">
    <location>
        <position position="180"/>
    </location>
</feature>
<gene>
    <name type="primary">CML2</name>
    <name type="ordered locus">Os11g0134400</name>
    <name type="ordered locus">LOC_Os11g03980</name>
    <name type="ORF">OsJ_031538</name>
</gene>
<proteinExistence type="inferred from homology"/>
<dbReference type="EMBL" id="DP000010">
    <property type="protein sequence ID" value="ABA91315.1"/>
    <property type="status" value="ALT_SEQ"/>
    <property type="molecule type" value="Genomic_DNA"/>
</dbReference>
<dbReference type="EMBL" id="AP008217">
    <property type="protein sequence ID" value="BAF27521.2"/>
    <property type="status" value="ALT_SEQ"/>
    <property type="molecule type" value="Genomic_DNA"/>
</dbReference>
<dbReference type="EMBL" id="AP014967">
    <property type="protein sequence ID" value="BAT12553.1"/>
    <property type="molecule type" value="Genomic_DNA"/>
</dbReference>
<dbReference type="EMBL" id="CM000148">
    <property type="protein sequence ID" value="EAZ17329.1"/>
    <property type="status" value="ALT_SEQ"/>
    <property type="molecule type" value="Genomic_DNA"/>
</dbReference>
<dbReference type="RefSeq" id="XP_015617153.1">
    <property type="nucleotide sequence ID" value="XM_015761667.1"/>
</dbReference>
<dbReference type="SMR" id="Q0IUU4"/>
<dbReference type="FunCoup" id="Q0IUU4">
    <property type="interactions" value="248"/>
</dbReference>
<dbReference type="STRING" id="39947.Q0IUU4"/>
<dbReference type="PaxDb" id="39947-Q0IUU4"/>
<dbReference type="EnsemblPlants" id="Os11t0134400-00">
    <property type="protein sequence ID" value="Os11t0134400-00"/>
    <property type="gene ID" value="Os11g0134400"/>
</dbReference>
<dbReference type="Gramene" id="Os11t0134400-00">
    <property type="protein sequence ID" value="Os11t0134400-00"/>
    <property type="gene ID" value="Os11g0134400"/>
</dbReference>
<dbReference type="KEGG" id="dosa:Os11g0134400"/>
<dbReference type="eggNOG" id="KOG0027">
    <property type="taxonomic scope" value="Eukaryota"/>
</dbReference>
<dbReference type="HOGENOM" id="CLU_061288_2_0_1"/>
<dbReference type="InParanoid" id="Q0IUU4"/>
<dbReference type="OMA" id="EMEFVEF"/>
<dbReference type="OrthoDB" id="1851401at2759"/>
<dbReference type="Proteomes" id="UP000000763">
    <property type="component" value="Chromosome 11"/>
</dbReference>
<dbReference type="Proteomes" id="UP000007752">
    <property type="component" value="Chromosome 11"/>
</dbReference>
<dbReference type="Proteomes" id="UP000059680">
    <property type="component" value="Chromosome 11"/>
</dbReference>
<dbReference type="GO" id="GO:0005737">
    <property type="term" value="C:cytoplasm"/>
    <property type="evidence" value="ECO:0000318"/>
    <property type="project" value="GO_Central"/>
</dbReference>
<dbReference type="GO" id="GO:0016020">
    <property type="term" value="C:membrane"/>
    <property type="evidence" value="ECO:0007669"/>
    <property type="project" value="UniProtKB-SubCell"/>
</dbReference>
<dbReference type="GO" id="GO:0005509">
    <property type="term" value="F:calcium ion binding"/>
    <property type="evidence" value="ECO:0000318"/>
    <property type="project" value="GO_Central"/>
</dbReference>
<dbReference type="GO" id="GO:0030234">
    <property type="term" value="F:enzyme regulator activity"/>
    <property type="evidence" value="ECO:0000318"/>
    <property type="project" value="GO_Central"/>
</dbReference>
<dbReference type="CDD" id="cd00051">
    <property type="entry name" value="EFh"/>
    <property type="match status" value="2"/>
</dbReference>
<dbReference type="FunFam" id="1.10.238.10:FF:000398">
    <property type="entry name" value="Calmodulin-like protein 3"/>
    <property type="match status" value="1"/>
</dbReference>
<dbReference type="FunFam" id="1.10.238.10:FF:000251">
    <property type="entry name" value="Calmodulin-related protein 97A"/>
    <property type="match status" value="1"/>
</dbReference>
<dbReference type="Gene3D" id="1.10.238.10">
    <property type="entry name" value="EF-hand"/>
    <property type="match status" value="3"/>
</dbReference>
<dbReference type="InterPro" id="IPR050230">
    <property type="entry name" value="CALM/Myosin/TropC-like"/>
</dbReference>
<dbReference type="InterPro" id="IPR011992">
    <property type="entry name" value="EF-hand-dom_pair"/>
</dbReference>
<dbReference type="InterPro" id="IPR018247">
    <property type="entry name" value="EF_Hand_1_Ca_BS"/>
</dbReference>
<dbReference type="InterPro" id="IPR002048">
    <property type="entry name" value="EF_hand_dom"/>
</dbReference>
<dbReference type="PANTHER" id="PTHR23048:SF54">
    <property type="entry name" value="EF-HAND DOMAIN-CONTAINING PROTEIN"/>
    <property type="match status" value="1"/>
</dbReference>
<dbReference type="PANTHER" id="PTHR23048">
    <property type="entry name" value="MYOSIN LIGHT CHAIN 1, 3"/>
    <property type="match status" value="1"/>
</dbReference>
<dbReference type="Pfam" id="PF13499">
    <property type="entry name" value="EF-hand_7"/>
    <property type="match status" value="2"/>
</dbReference>
<dbReference type="SMART" id="SM00054">
    <property type="entry name" value="EFh"/>
    <property type="match status" value="4"/>
</dbReference>
<dbReference type="SUPFAM" id="SSF47473">
    <property type="entry name" value="EF-hand"/>
    <property type="match status" value="1"/>
</dbReference>
<dbReference type="PROSITE" id="PS00018">
    <property type="entry name" value="EF_HAND_1"/>
    <property type="match status" value="4"/>
</dbReference>
<dbReference type="PROSITE" id="PS50222">
    <property type="entry name" value="EF_HAND_2"/>
    <property type="match status" value="4"/>
</dbReference>
<keyword id="KW-0106">Calcium</keyword>
<keyword id="KW-0449">Lipoprotein</keyword>
<keyword id="KW-0472">Membrane</keyword>
<keyword id="KW-0479">Metal-binding</keyword>
<keyword id="KW-0488">Methylation</keyword>
<keyword id="KW-0564">Palmitate</keyword>
<keyword id="KW-0636">Prenylation</keyword>
<keyword id="KW-1185">Reference proteome</keyword>
<keyword id="KW-0677">Repeat</keyword>